<accession>P31301</accession>
<accession>A0A0D1E3G2</accession>
<accession>Q4PEE2</accession>
<reference key="1">
    <citation type="journal article" date="1992" name="Gene">
        <title>The Ustilago maydis pyr3 gene: sequence and transcriptional analysis.</title>
        <authorList>
            <person name="Spanos A."/>
            <person name="Kanuga N."/>
            <person name="Holden D.W."/>
            <person name="Banks G.R."/>
        </authorList>
    </citation>
    <scope>NUCLEOTIDE SEQUENCE [GENOMIC DNA]</scope>
    <source>
        <strain>DSM 14603 / FGSC 9021 / UM521</strain>
    </source>
</reference>
<reference key="2">
    <citation type="journal article" date="2006" name="Nature">
        <title>Insights from the genome of the biotrophic fungal plant pathogen Ustilago maydis.</title>
        <authorList>
            <person name="Kaemper J."/>
            <person name="Kahmann R."/>
            <person name="Boelker M."/>
            <person name="Ma L.-J."/>
            <person name="Brefort T."/>
            <person name="Saville B.J."/>
            <person name="Banuett F."/>
            <person name="Kronstad J.W."/>
            <person name="Gold S.E."/>
            <person name="Mueller O."/>
            <person name="Perlin M.H."/>
            <person name="Woesten H.A.B."/>
            <person name="de Vries R."/>
            <person name="Ruiz-Herrera J."/>
            <person name="Reynaga-Pena C.G."/>
            <person name="Snetselaar K."/>
            <person name="McCann M."/>
            <person name="Perez-Martin J."/>
            <person name="Feldbruegge M."/>
            <person name="Basse C.W."/>
            <person name="Steinberg G."/>
            <person name="Ibeas J.I."/>
            <person name="Holloman W."/>
            <person name="Guzman P."/>
            <person name="Farman M.L."/>
            <person name="Stajich J.E."/>
            <person name="Sentandreu R."/>
            <person name="Gonzalez-Prieto J.M."/>
            <person name="Kennell J.C."/>
            <person name="Molina L."/>
            <person name="Schirawski J."/>
            <person name="Mendoza-Mendoza A."/>
            <person name="Greilinger D."/>
            <person name="Muench K."/>
            <person name="Roessel N."/>
            <person name="Scherer M."/>
            <person name="Vranes M."/>
            <person name="Ladendorf O."/>
            <person name="Vincon V."/>
            <person name="Fuchs U."/>
            <person name="Sandrock B."/>
            <person name="Meng S."/>
            <person name="Ho E.C.H."/>
            <person name="Cahill M.J."/>
            <person name="Boyce K.J."/>
            <person name="Klose J."/>
            <person name="Klosterman S.J."/>
            <person name="Deelstra H.J."/>
            <person name="Ortiz-Castellanos L."/>
            <person name="Li W."/>
            <person name="Sanchez-Alonso P."/>
            <person name="Schreier P.H."/>
            <person name="Haeuser-Hahn I."/>
            <person name="Vaupel M."/>
            <person name="Koopmann E."/>
            <person name="Friedrich G."/>
            <person name="Voss H."/>
            <person name="Schlueter T."/>
            <person name="Margolis J."/>
            <person name="Platt D."/>
            <person name="Swimmer C."/>
            <person name="Gnirke A."/>
            <person name="Chen F."/>
            <person name="Vysotskaia V."/>
            <person name="Mannhaupt G."/>
            <person name="Gueldener U."/>
            <person name="Muensterkoetter M."/>
            <person name="Haase D."/>
            <person name="Oesterheld M."/>
            <person name="Mewes H.-W."/>
            <person name="Mauceli E.W."/>
            <person name="DeCaprio D."/>
            <person name="Wade C.M."/>
            <person name="Butler J."/>
            <person name="Young S.K."/>
            <person name="Jaffe D.B."/>
            <person name="Calvo S.E."/>
            <person name="Nusbaum C."/>
            <person name="Galagan J.E."/>
            <person name="Birren B.W."/>
        </authorList>
    </citation>
    <scope>NUCLEOTIDE SEQUENCE [LARGE SCALE GENOMIC DNA]</scope>
    <source>
        <strain>DSM 14603 / FGSC 9021 / UM521</strain>
    </source>
</reference>
<reference key="3">
    <citation type="submission" date="2014-09" db="EMBL/GenBank/DDBJ databases">
        <authorList>
            <person name="Gueldener U."/>
            <person name="Muensterkoetter M."/>
            <person name="Walter M.C."/>
            <person name="Mannhaupt G."/>
            <person name="Kahmann R."/>
        </authorList>
    </citation>
    <scope>GENOME REANNOTATION</scope>
    <source>
        <strain>DSM 14603 / FGSC 9021 / UM521</strain>
    </source>
</reference>
<feature type="chain" id="PRO_0000147291" description="Dihydroorotase">
    <location>
        <begin position="1"/>
        <end position="394"/>
    </location>
</feature>
<feature type="binding site" evidence="1">
    <location>
        <position position="15"/>
    </location>
    <ligand>
        <name>Zn(2+)</name>
        <dbReference type="ChEBI" id="CHEBI:29105"/>
        <label>1</label>
    </ligand>
</feature>
<feature type="binding site" evidence="1">
    <location>
        <position position="17"/>
    </location>
    <ligand>
        <name>Zn(2+)</name>
        <dbReference type="ChEBI" id="CHEBI:29105"/>
        <label>1</label>
    </ligand>
</feature>
<feature type="binding site" description="via carbamate group" evidence="1">
    <location>
        <position position="98"/>
    </location>
    <ligand>
        <name>Zn(2+)</name>
        <dbReference type="ChEBI" id="CHEBI:29105"/>
        <label>1</label>
    </ligand>
</feature>
<feature type="binding site" description="via carbamate group" evidence="1">
    <location>
        <position position="98"/>
    </location>
    <ligand>
        <name>Zn(2+)</name>
        <dbReference type="ChEBI" id="CHEBI:29105"/>
        <label>2</label>
    </ligand>
</feature>
<feature type="binding site" evidence="1">
    <location>
        <position position="135"/>
    </location>
    <ligand>
        <name>Zn(2+)</name>
        <dbReference type="ChEBI" id="CHEBI:29105"/>
        <label>2</label>
    </ligand>
</feature>
<feature type="binding site" evidence="1">
    <location>
        <position position="175"/>
    </location>
    <ligand>
        <name>Zn(2+)</name>
        <dbReference type="ChEBI" id="CHEBI:29105"/>
        <label>2</label>
    </ligand>
</feature>
<feature type="binding site" evidence="1">
    <location>
        <position position="245"/>
    </location>
    <ligand>
        <name>Zn(2+)</name>
        <dbReference type="ChEBI" id="CHEBI:29105"/>
        <label>1</label>
    </ligand>
</feature>
<feature type="modified residue" description="N6-carboxylysine" evidence="1">
    <location>
        <position position="98"/>
    </location>
</feature>
<feature type="sequence conflict" description="In Ref. 1; CAA44866." evidence="2" ref="1">
    <original>A</original>
    <variation>G</variation>
    <location>
        <position position="12"/>
    </location>
</feature>
<feature type="sequence conflict" description="In Ref. 1; CAA44866." evidence="2" ref="1">
    <original>RAL</original>
    <variation>AAV</variation>
    <location>
        <begin position="63"/>
        <end position="65"/>
    </location>
</feature>
<feature type="sequence conflict" description="In Ref. 1; CAA44866." evidence="2" ref="1">
    <original>KA</original>
    <variation>EG</variation>
    <location>
        <begin position="88"/>
        <end position="89"/>
    </location>
</feature>
<feature type="sequence conflict" description="In Ref. 1; CAA44866." evidence="2" ref="1">
    <original>I</original>
    <variation>M</variation>
    <location>
        <position position="162"/>
    </location>
</feature>
<feature type="sequence conflict" description="In Ref. 1; CAA44866." evidence="2" ref="1">
    <original>A</original>
    <variation>D</variation>
    <location>
        <position position="270"/>
    </location>
</feature>
<feature type="sequence conflict" description="In Ref. 1; CAA44866." evidence="2" ref="1">
    <original>G</original>
    <variation>A</variation>
    <location>
        <position position="289"/>
    </location>
</feature>
<feature type="sequence conflict" description="In Ref. 1; CAA44866." evidence="2" ref="1">
    <original>CA</original>
    <variation>WP</variation>
    <location>
        <begin position="300"/>
        <end position="301"/>
    </location>
</feature>
<feature type="sequence conflict" description="In Ref. 1; CAA44866." evidence="2" ref="1">
    <original>S</original>
    <variation>C</variation>
    <location>
        <position position="348"/>
    </location>
</feature>
<feature type="sequence conflict" description="In Ref. 1; CAA44866." evidence="2" ref="1">
    <original>A</original>
    <variation>R</variation>
    <location>
        <position position="373"/>
    </location>
</feature>
<feature type="sequence conflict" description="In Ref. 1; CAA44866." evidence="2" ref="1">
    <original>GKCLGWE</original>
    <variation>VSAG</variation>
    <location>
        <begin position="384"/>
        <end position="390"/>
    </location>
</feature>
<name>PYRC_MYCMD</name>
<comment type="catalytic activity">
    <reaction>
        <text>(S)-dihydroorotate + H2O = N-carbamoyl-L-aspartate + H(+)</text>
        <dbReference type="Rhea" id="RHEA:24296"/>
        <dbReference type="ChEBI" id="CHEBI:15377"/>
        <dbReference type="ChEBI" id="CHEBI:15378"/>
        <dbReference type="ChEBI" id="CHEBI:30864"/>
        <dbReference type="ChEBI" id="CHEBI:32814"/>
        <dbReference type="EC" id="3.5.2.3"/>
    </reaction>
</comment>
<comment type="cofactor">
    <cofactor evidence="1">
        <name>Zn(2+)</name>
        <dbReference type="ChEBI" id="CHEBI:29105"/>
    </cofactor>
    <text evidence="1">Binds 2 Zn(2+) ions per subunit.</text>
</comment>
<comment type="pathway">
    <text>Pyrimidine metabolism; UMP biosynthesis via de novo pathway; (S)-dihydroorotate from bicarbonate: step 3/3.</text>
</comment>
<comment type="induction">
    <text>By N-carbamoyl-L-aspartate.</text>
</comment>
<comment type="similarity">
    <text evidence="2">Belongs to the metallo-dependent hydrolases superfamily. DHOase family. Class II DHOase subfamily.</text>
</comment>
<dbReference type="EC" id="3.5.2.3"/>
<dbReference type="EMBL" id="X63181">
    <property type="protein sequence ID" value="CAA44866.1"/>
    <property type="molecule type" value="Genomic_DNA"/>
</dbReference>
<dbReference type="EMBL" id="CM003142">
    <property type="protein sequence ID" value="KIS70351.1"/>
    <property type="molecule type" value="Genomic_DNA"/>
</dbReference>
<dbReference type="PIR" id="JQ1667">
    <property type="entry name" value="DEUSO"/>
</dbReference>
<dbReference type="RefSeq" id="XP_011387556.1">
    <property type="nucleotide sequence ID" value="XM_011389254.1"/>
</dbReference>
<dbReference type="SMR" id="P31301"/>
<dbReference type="FunCoup" id="P31301">
    <property type="interactions" value="230"/>
</dbReference>
<dbReference type="STRING" id="237631.P31301"/>
<dbReference type="EnsemblFungi" id="KIS70351">
    <property type="protein sequence ID" value="KIS70351"/>
    <property type="gene ID" value="UMAG_01521"/>
</dbReference>
<dbReference type="GeneID" id="23562504"/>
<dbReference type="KEGG" id="uma:UMAG_01521"/>
<dbReference type="VEuPathDB" id="FungiDB:UMAG_01521"/>
<dbReference type="eggNOG" id="KOG2902">
    <property type="taxonomic scope" value="Eukaryota"/>
</dbReference>
<dbReference type="HOGENOM" id="CLU_041558_0_0_1"/>
<dbReference type="InParanoid" id="P31301"/>
<dbReference type="OMA" id="TLHHISM"/>
<dbReference type="OrthoDB" id="1670005at2759"/>
<dbReference type="BRENDA" id="3.5.2.3">
    <property type="organism ID" value="6587"/>
</dbReference>
<dbReference type="UniPathway" id="UPA00070">
    <property type="reaction ID" value="UER00117"/>
</dbReference>
<dbReference type="Proteomes" id="UP000000561">
    <property type="component" value="Chromosome 3"/>
</dbReference>
<dbReference type="GO" id="GO:0005737">
    <property type="term" value="C:cytoplasm"/>
    <property type="evidence" value="ECO:0000318"/>
    <property type="project" value="GO_Central"/>
</dbReference>
<dbReference type="GO" id="GO:0004151">
    <property type="term" value="F:dihydroorotase activity"/>
    <property type="evidence" value="ECO:0000318"/>
    <property type="project" value="GO_Central"/>
</dbReference>
<dbReference type="GO" id="GO:0046872">
    <property type="term" value="F:metal ion binding"/>
    <property type="evidence" value="ECO:0007669"/>
    <property type="project" value="UniProtKB-KW"/>
</dbReference>
<dbReference type="GO" id="GO:0006207">
    <property type="term" value="P:'de novo' pyrimidine nucleobase biosynthetic process"/>
    <property type="evidence" value="ECO:0000318"/>
    <property type="project" value="GO_Central"/>
</dbReference>
<dbReference type="GO" id="GO:0044205">
    <property type="term" value="P:'de novo' UMP biosynthetic process"/>
    <property type="evidence" value="ECO:0007669"/>
    <property type="project" value="UniProtKB-UniPathway"/>
</dbReference>
<dbReference type="GO" id="GO:0006221">
    <property type="term" value="P:pyrimidine nucleotide biosynthetic process"/>
    <property type="evidence" value="ECO:0000318"/>
    <property type="project" value="GO_Central"/>
</dbReference>
<dbReference type="CDD" id="cd01294">
    <property type="entry name" value="DHOase"/>
    <property type="match status" value="1"/>
</dbReference>
<dbReference type="FunFam" id="3.20.20.140:FF:000071">
    <property type="entry name" value="Dihydroorotase, homodimeric type, variant"/>
    <property type="match status" value="1"/>
</dbReference>
<dbReference type="Gene3D" id="3.20.20.140">
    <property type="entry name" value="Metal-dependent hydrolases"/>
    <property type="match status" value="1"/>
</dbReference>
<dbReference type="HAMAP" id="MF_00219">
    <property type="entry name" value="PyrC_classII"/>
    <property type="match status" value="1"/>
</dbReference>
<dbReference type="InterPro" id="IPR006680">
    <property type="entry name" value="Amidohydro-rel"/>
</dbReference>
<dbReference type="InterPro" id="IPR004721">
    <property type="entry name" value="DHOdimr"/>
</dbReference>
<dbReference type="InterPro" id="IPR002195">
    <property type="entry name" value="Dihydroorotase_CS"/>
</dbReference>
<dbReference type="InterPro" id="IPR032466">
    <property type="entry name" value="Metal_Hydrolase"/>
</dbReference>
<dbReference type="NCBIfam" id="TIGR00856">
    <property type="entry name" value="pyrC_dimer"/>
    <property type="match status" value="1"/>
</dbReference>
<dbReference type="PANTHER" id="PTHR43137">
    <property type="entry name" value="DIHYDROOROTASE"/>
    <property type="match status" value="1"/>
</dbReference>
<dbReference type="PANTHER" id="PTHR43137:SF1">
    <property type="entry name" value="DIHYDROOROTASE"/>
    <property type="match status" value="1"/>
</dbReference>
<dbReference type="Pfam" id="PF01979">
    <property type="entry name" value="Amidohydro_1"/>
    <property type="match status" value="1"/>
</dbReference>
<dbReference type="PIRSF" id="PIRSF001237">
    <property type="entry name" value="DHOdimr"/>
    <property type="match status" value="1"/>
</dbReference>
<dbReference type="SUPFAM" id="SSF51556">
    <property type="entry name" value="Metallo-dependent hydrolases"/>
    <property type="match status" value="1"/>
</dbReference>
<dbReference type="PROSITE" id="PS00482">
    <property type="entry name" value="DIHYDROOROTASE_1"/>
    <property type="match status" value="1"/>
</dbReference>
<dbReference type="PROSITE" id="PS00483">
    <property type="entry name" value="DIHYDROOROTASE_2"/>
    <property type="match status" value="1"/>
</dbReference>
<keyword id="KW-0378">Hydrolase</keyword>
<keyword id="KW-0479">Metal-binding</keyword>
<keyword id="KW-0665">Pyrimidine biosynthesis</keyword>
<keyword id="KW-1185">Reference proteome</keyword>
<keyword id="KW-0862">Zinc</keyword>
<sequence>MSVQEITIPAPADFHVHLRQGKMSELVTPHVAEGGVSLAYVMPNLVPPITSTQQAMEYLERLRALAPQTMFVGTLYLSPDLTPAEIAKAAQNGVRGVKSYPRGVTTNSDSGIEDYETYYPIFEEMQKHDMVLNLHGELPSNADAGICVLNAEEKFLTHLFKIHGEFPKLKIVLEHATTRKAVEAVKQCGDTVGCTITPHHLELIVDDWAGKPLNFCKPVAKYPDDRQALRDVIRQGHPRFFLGSDSAPHPLANKYPSAVTHGAPGTKASASGSDHLEATGVVSCGCAAGVYTSSILVPLCATLLEAFGALDQLANYVSINGRNFYGYNDDQHAKHGSIKLRKVRSRSSISPAAATVPAVYVHPEFREVPDSDASKVQVVPFWAGKCLGWEIVRS</sequence>
<protein>
    <recommendedName>
        <fullName>Dihydroorotase</fullName>
        <shortName>DHOase</shortName>
        <ecNumber>3.5.2.3</ecNumber>
    </recommendedName>
</protein>
<evidence type="ECO:0000250" key="1">
    <source>
        <dbReference type="UniProtKB" id="P05020"/>
    </source>
</evidence>
<evidence type="ECO:0000305" key="2"/>
<organism>
    <name type="scientific">Mycosarcoma maydis</name>
    <name type="common">Corn smut fungus</name>
    <name type="synonym">Ustilago maydis</name>
    <dbReference type="NCBI Taxonomy" id="5270"/>
    <lineage>
        <taxon>Eukaryota</taxon>
        <taxon>Fungi</taxon>
        <taxon>Dikarya</taxon>
        <taxon>Basidiomycota</taxon>
        <taxon>Ustilaginomycotina</taxon>
        <taxon>Ustilaginomycetes</taxon>
        <taxon>Ustilaginales</taxon>
        <taxon>Ustilaginaceae</taxon>
        <taxon>Mycosarcoma</taxon>
    </lineage>
</organism>
<gene>
    <name type="primary">PYR3</name>
    <name type="ORF">UMAG_01521</name>
</gene>
<proteinExistence type="evidence at transcript level"/>